<protein>
    <recommendedName>
        <fullName evidence="1">23S rRNA (guanosine-2'-O-)-methyltransferase RlmB</fullName>
        <ecNumber evidence="1">2.1.1.185</ecNumber>
    </recommendedName>
    <alternativeName>
        <fullName evidence="1">23S rRNA (guanosine2251 2'-O)-methyltransferase</fullName>
    </alternativeName>
    <alternativeName>
        <fullName evidence="1">23S rRNA Gm2251 2'-O-methyltransferase</fullName>
    </alternativeName>
</protein>
<evidence type="ECO:0000255" key="1">
    <source>
        <dbReference type="HAMAP-Rule" id="MF_01887"/>
    </source>
</evidence>
<feature type="chain" id="PRO_0000159781" description="23S rRNA (guanosine-2'-O-)-methyltransferase RlmB">
    <location>
        <begin position="1"/>
        <end position="247"/>
    </location>
</feature>
<feature type="binding site" evidence="1">
    <location>
        <position position="197"/>
    </location>
    <ligand>
        <name>S-adenosyl-L-methionine</name>
        <dbReference type="ChEBI" id="CHEBI:59789"/>
    </ligand>
</feature>
<feature type="binding site" evidence="1">
    <location>
        <position position="217"/>
    </location>
    <ligand>
        <name>S-adenosyl-L-methionine</name>
        <dbReference type="ChEBI" id="CHEBI:59789"/>
    </ligand>
</feature>
<feature type="binding site" evidence="1">
    <location>
        <position position="226"/>
    </location>
    <ligand>
        <name>S-adenosyl-L-methionine</name>
        <dbReference type="ChEBI" id="CHEBI:59789"/>
    </ligand>
</feature>
<accession>Q9RED7</accession>
<reference key="1">
    <citation type="submission" date="1999-05" db="EMBL/GenBank/DDBJ databases">
        <title>Intracellular Burkholderia of the arbuscular mycorrhizal fungus Gigaspora margarita possesses the vacB gene, which is involved in cellular adherence and spreading of bacteria.</title>
        <authorList>
            <person name="Juan Manuel R.L."/>
            <person name="Paola B."/>
        </authorList>
    </citation>
    <scope>NUCLEOTIDE SEQUENCE [GENOMIC DNA]</scope>
</reference>
<name>RLMB_BURSP</name>
<organism>
    <name type="scientific">Burkholderia sp</name>
    <dbReference type="NCBI Taxonomy" id="36773"/>
    <lineage>
        <taxon>Bacteria</taxon>
        <taxon>Pseudomonadati</taxon>
        <taxon>Pseudomonadota</taxon>
        <taxon>Betaproteobacteria</taxon>
        <taxon>Burkholderiales</taxon>
        <taxon>Burkholderiaceae</taxon>
        <taxon>Burkholderia</taxon>
    </lineage>
</organism>
<dbReference type="EC" id="2.1.1.185" evidence="1"/>
<dbReference type="EMBL" id="AJ242786">
    <property type="protein sequence ID" value="CAB64790.1"/>
    <property type="molecule type" value="Genomic_DNA"/>
</dbReference>
<dbReference type="SMR" id="Q9RED7"/>
<dbReference type="GO" id="GO:0005829">
    <property type="term" value="C:cytosol"/>
    <property type="evidence" value="ECO:0007669"/>
    <property type="project" value="TreeGrafter"/>
</dbReference>
<dbReference type="GO" id="GO:0003723">
    <property type="term" value="F:RNA binding"/>
    <property type="evidence" value="ECO:0007669"/>
    <property type="project" value="InterPro"/>
</dbReference>
<dbReference type="GO" id="GO:0070039">
    <property type="term" value="F:rRNA (guanosine-2'-O-)-methyltransferase activity"/>
    <property type="evidence" value="ECO:0007669"/>
    <property type="project" value="UniProtKB-UniRule"/>
</dbReference>
<dbReference type="CDD" id="cd18103">
    <property type="entry name" value="SpoU-like_RlmB"/>
    <property type="match status" value="1"/>
</dbReference>
<dbReference type="FunFam" id="3.40.1280.10:FF:000008">
    <property type="entry name" value="Group 3 RNA methyltransferase TrmH"/>
    <property type="match status" value="1"/>
</dbReference>
<dbReference type="Gene3D" id="3.30.1330.30">
    <property type="match status" value="1"/>
</dbReference>
<dbReference type="Gene3D" id="3.40.1280.10">
    <property type="match status" value="1"/>
</dbReference>
<dbReference type="HAMAP" id="MF_01887">
    <property type="entry name" value="23SrRNA_methyltr_B"/>
    <property type="match status" value="1"/>
</dbReference>
<dbReference type="InterPro" id="IPR024915">
    <property type="entry name" value="23S_rRNA_MeTrfase_RlmB"/>
</dbReference>
<dbReference type="InterPro" id="IPR029028">
    <property type="entry name" value="Alpha/beta_knot_MTases"/>
</dbReference>
<dbReference type="InterPro" id="IPR029064">
    <property type="entry name" value="Ribosomal_eL30-like_sf"/>
</dbReference>
<dbReference type="InterPro" id="IPR004441">
    <property type="entry name" value="rRNA_MeTrfase_TrmH"/>
</dbReference>
<dbReference type="InterPro" id="IPR001537">
    <property type="entry name" value="SpoU_MeTrfase"/>
</dbReference>
<dbReference type="InterPro" id="IPR013123">
    <property type="entry name" value="SpoU_subst-bd"/>
</dbReference>
<dbReference type="InterPro" id="IPR029026">
    <property type="entry name" value="tRNA_m1G_MTases_N"/>
</dbReference>
<dbReference type="NCBIfam" id="TIGR00186">
    <property type="entry name" value="rRNA_methyl_3"/>
    <property type="match status" value="1"/>
</dbReference>
<dbReference type="PANTHER" id="PTHR46429">
    <property type="entry name" value="23S RRNA (GUANOSINE-2'-O-)-METHYLTRANSFERASE RLMB"/>
    <property type="match status" value="1"/>
</dbReference>
<dbReference type="PANTHER" id="PTHR46429:SF1">
    <property type="entry name" value="23S RRNA (GUANOSINE-2'-O-)-METHYLTRANSFERASE RLMB"/>
    <property type="match status" value="1"/>
</dbReference>
<dbReference type="Pfam" id="PF00588">
    <property type="entry name" value="SpoU_methylase"/>
    <property type="match status" value="1"/>
</dbReference>
<dbReference type="Pfam" id="PF08032">
    <property type="entry name" value="SpoU_sub_bind"/>
    <property type="match status" value="1"/>
</dbReference>
<dbReference type="SMART" id="SM00967">
    <property type="entry name" value="SpoU_sub_bind"/>
    <property type="match status" value="1"/>
</dbReference>
<dbReference type="SUPFAM" id="SSF75217">
    <property type="entry name" value="alpha/beta knot"/>
    <property type="match status" value="1"/>
</dbReference>
<dbReference type="SUPFAM" id="SSF55315">
    <property type="entry name" value="L30e-like"/>
    <property type="match status" value="1"/>
</dbReference>
<keyword id="KW-0963">Cytoplasm</keyword>
<keyword id="KW-0489">Methyltransferase</keyword>
<keyword id="KW-0698">rRNA processing</keyword>
<keyword id="KW-0949">S-adenosyl-L-methionine</keyword>
<keyword id="KW-0808">Transferase</keyword>
<proteinExistence type="inferred from homology"/>
<comment type="function">
    <text evidence="1">Specifically methylates the ribose of guanosine 2251 in 23S rRNA.</text>
</comment>
<comment type="catalytic activity">
    <reaction evidence="1">
        <text>guanosine(2251) in 23S rRNA + S-adenosyl-L-methionine = 2'-O-methylguanosine(2251) in 23S rRNA + S-adenosyl-L-homocysteine + H(+)</text>
        <dbReference type="Rhea" id="RHEA:24140"/>
        <dbReference type="Rhea" id="RHEA-COMP:10239"/>
        <dbReference type="Rhea" id="RHEA-COMP:10241"/>
        <dbReference type="ChEBI" id="CHEBI:15378"/>
        <dbReference type="ChEBI" id="CHEBI:57856"/>
        <dbReference type="ChEBI" id="CHEBI:59789"/>
        <dbReference type="ChEBI" id="CHEBI:74269"/>
        <dbReference type="ChEBI" id="CHEBI:74445"/>
        <dbReference type="EC" id="2.1.1.185"/>
    </reaction>
</comment>
<comment type="subcellular location">
    <subcellularLocation>
        <location evidence="1">Cytoplasm</location>
    </subcellularLocation>
</comment>
<comment type="similarity">
    <text evidence="1">Belongs to the class IV-like SAM-binding methyltransferase superfamily. RNA methyltransferase TrmH family. RlmB subfamily.</text>
</comment>
<sequence length="247" mass="26118">MPRLKLLHGFHAITARLRAFPATVNEVWYDPARQDARMRAFLHLAASANARLIAADASRLNALSGEKRHQGVVARVTEATRAHSLETLLDTIEGQPLLLALDGVTDPHNLGACLRVADGAGAHAVIAPRRRAAGLTAAAAKAANGAAETVPYLTVINLARALRALKNAGIQVIGTADDATTSLFDIQLDGALALVMGAEGAGMRRLTREACDEVVRIPLAGHVQSLNVSVASGICLFEAVRQRLKRL</sequence>
<gene>
    <name evidence="1" type="primary">rlmB</name>
</gene>